<organism>
    <name type="scientific">Jasminum nudiflorum</name>
    <name type="common">Winter jasmine</name>
    <dbReference type="NCBI Taxonomy" id="126431"/>
    <lineage>
        <taxon>Eukaryota</taxon>
        <taxon>Viridiplantae</taxon>
        <taxon>Streptophyta</taxon>
        <taxon>Embryophyta</taxon>
        <taxon>Tracheophyta</taxon>
        <taxon>Spermatophyta</taxon>
        <taxon>Magnoliopsida</taxon>
        <taxon>eudicotyledons</taxon>
        <taxon>Gunneridae</taxon>
        <taxon>Pentapetalae</taxon>
        <taxon>asterids</taxon>
        <taxon>lamiids</taxon>
        <taxon>Lamiales</taxon>
        <taxon>Oleaceae</taxon>
        <taxon>Jasmineae</taxon>
        <taxon>Jasminum</taxon>
    </lineage>
</organism>
<protein>
    <recommendedName>
        <fullName evidence="1">Photosystem II reaction center protein Z</fullName>
        <shortName evidence="1">PSII-Z</shortName>
    </recommendedName>
</protein>
<comment type="function">
    <text evidence="1">May control the interaction of photosystem II (PSII) cores with the light-harvesting antenna, regulates electron flow through the 2 photosystem reaction centers. PSII is a light-driven water plastoquinone oxidoreductase, using light energy to abstract electrons from H(2)O, generating a proton gradient subsequently used for ATP formation.</text>
</comment>
<comment type="subunit">
    <text evidence="1">PSII is composed of 1 copy each of membrane proteins PsbA, PsbB, PsbC, PsbD, PsbE, PsbF, PsbH, PsbI, PsbJ, PsbK, PsbL, PsbM, PsbT, PsbY, PsbZ, Psb30/Ycf12, at least 3 peripheral proteins of the oxygen-evolving complex and a large number of cofactors. It forms dimeric complexes.</text>
</comment>
<comment type="subcellular location">
    <subcellularLocation>
        <location evidence="1">Plastid</location>
        <location evidence="1">Chloroplast thylakoid membrane</location>
        <topology evidence="1">Multi-pass membrane protein</topology>
    </subcellularLocation>
</comment>
<comment type="similarity">
    <text evidence="1">Belongs to the PsbZ family.</text>
</comment>
<dbReference type="EMBL" id="DQ673255">
    <property type="protein sequence ID" value="ABG74625.1"/>
    <property type="molecule type" value="Genomic_DNA"/>
</dbReference>
<dbReference type="RefSeq" id="YP_778487.1">
    <property type="nucleotide sequence ID" value="NC_008407.1"/>
</dbReference>
<dbReference type="SMR" id="Q06RD4"/>
<dbReference type="GeneID" id="4319818"/>
<dbReference type="GO" id="GO:0009535">
    <property type="term" value="C:chloroplast thylakoid membrane"/>
    <property type="evidence" value="ECO:0007669"/>
    <property type="project" value="UniProtKB-SubCell"/>
</dbReference>
<dbReference type="GO" id="GO:0009539">
    <property type="term" value="C:photosystem II reaction center"/>
    <property type="evidence" value="ECO:0007669"/>
    <property type="project" value="InterPro"/>
</dbReference>
<dbReference type="GO" id="GO:0015979">
    <property type="term" value="P:photosynthesis"/>
    <property type="evidence" value="ECO:0007669"/>
    <property type="project" value="UniProtKB-UniRule"/>
</dbReference>
<dbReference type="GO" id="GO:0042549">
    <property type="term" value="P:photosystem II stabilization"/>
    <property type="evidence" value="ECO:0007669"/>
    <property type="project" value="InterPro"/>
</dbReference>
<dbReference type="FunFam" id="1.10.287.740:FF:000001">
    <property type="entry name" value="Photosystem II reaction center protein Z"/>
    <property type="match status" value="1"/>
</dbReference>
<dbReference type="Gene3D" id="1.10.287.740">
    <property type="entry name" value="Photosystem II PsbZ, reaction centre"/>
    <property type="match status" value="1"/>
</dbReference>
<dbReference type="HAMAP" id="MF_00644">
    <property type="entry name" value="PSII_PsbZ"/>
    <property type="match status" value="1"/>
</dbReference>
<dbReference type="InterPro" id="IPR002644">
    <property type="entry name" value="PSII_PsbZ"/>
</dbReference>
<dbReference type="InterPro" id="IPR036512">
    <property type="entry name" value="PSII_PsbZ_sf"/>
</dbReference>
<dbReference type="NCBIfam" id="TIGR03043">
    <property type="entry name" value="PS_II_psbZ"/>
    <property type="match status" value="1"/>
</dbReference>
<dbReference type="PANTHER" id="PTHR34971">
    <property type="entry name" value="PHOTOSYSTEM II REACTION CENTER PROTEIN Z"/>
    <property type="match status" value="1"/>
</dbReference>
<dbReference type="PANTHER" id="PTHR34971:SF2">
    <property type="entry name" value="PHOTOSYSTEM II REACTION CENTER PROTEIN Z"/>
    <property type="match status" value="1"/>
</dbReference>
<dbReference type="Pfam" id="PF01737">
    <property type="entry name" value="Ycf9"/>
    <property type="match status" value="1"/>
</dbReference>
<dbReference type="SUPFAM" id="SSF161055">
    <property type="entry name" value="PsbZ-like"/>
    <property type="match status" value="1"/>
</dbReference>
<gene>
    <name evidence="1" type="primary">psbZ</name>
    <name type="ORF">JNC0385</name>
</gene>
<accession>Q06RD4</accession>
<evidence type="ECO:0000255" key="1">
    <source>
        <dbReference type="HAMAP-Rule" id="MF_00644"/>
    </source>
</evidence>
<name>PSBZ_JASNU</name>
<feature type="chain" id="PRO_0000277221" description="Photosystem II reaction center protein Z">
    <location>
        <begin position="1"/>
        <end position="62"/>
    </location>
</feature>
<feature type="transmembrane region" description="Helical" evidence="1">
    <location>
        <begin position="8"/>
        <end position="28"/>
    </location>
</feature>
<feature type="transmembrane region" description="Helical" evidence="1">
    <location>
        <begin position="41"/>
        <end position="61"/>
    </location>
</feature>
<geneLocation type="chloroplast"/>
<reference key="1">
    <citation type="journal article" date="2007" name="Mol. Biol. Evol.">
        <title>Gene relocations within chloroplast genomes of Jasminum and Menodora (Oleaceae) are due to multiple, overlapping inversions.</title>
        <authorList>
            <person name="Lee H.-L."/>
            <person name="Jansen R.K."/>
            <person name="Chumley T.W."/>
            <person name="Kim K.-J."/>
        </authorList>
    </citation>
    <scope>NUCLEOTIDE SEQUENCE [LARGE SCALE GENOMIC DNA]</scope>
</reference>
<proteinExistence type="inferred from homology"/>
<keyword id="KW-0150">Chloroplast</keyword>
<keyword id="KW-0472">Membrane</keyword>
<keyword id="KW-0602">Photosynthesis</keyword>
<keyword id="KW-0604">Photosystem II</keyword>
<keyword id="KW-0934">Plastid</keyword>
<keyword id="KW-0674">Reaction center</keyword>
<keyword id="KW-0793">Thylakoid</keyword>
<keyword id="KW-0812">Transmembrane</keyword>
<keyword id="KW-1133">Transmembrane helix</keyword>
<sequence>MTLVFQLAVFALIATSSILLISVPVVFASPDGWSSNKNVVFSGTSLWIGLVFLVGILNSLIS</sequence>